<accession>Q18LE6</accession>
<keyword id="KW-0167">Capsid protein</keyword>
<keyword id="KW-1048">Host nucleus</keyword>
<keyword id="KW-0945">Host-virus interaction</keyword>
<keyword id="KW-0231">Viral genome packaging</keyword>
<keyword id="KW-1163">Viral penetration into host nucleus</keyword>
<keyword id="KW-1188">Viral release from host cell</keyword>
<keyword id="KW-0946">Virion</keyword>
<keyword id="KW-1160">Virus entry into host cell</keyword>
<proteinExistence type="inferred from homology"/>
<name>CVC2_ELHVK</name>
<reference key="1">
    <citation type="journal article" date="2007" name="J. Virol.">
        <title>Identification of novel rodent herpesviruses, including the first gammaherpesvirus of Mus musculus.</title>
        <authorList>
            <person name="Ehlers B."/>
            <person name="Kuchler J."/>
            <person name="Yasmum N."/>
            <person name="Dural G."/>
            <person name="Voigt S."/>
            <person name="Schmidt-Chanasit J."/>
            <person name="Jakel T."/>
            <person name="Matuschka F.R."/>
            <person name="Richter D."/>
            <person name="Essbauer S."/>
            <person name="Hughes D.J."/>
            <person name="Summers C."/>
            <person name="Bennett M."/>
            <person name="Stewart J.P."/>
            <person name="Ulrich R.G."/>
        </authorList>
    </citation>
    <scope>NUCLEOTIDE SEQUENCE [GENOMIC DNA]</scope>
</reference>
<reference key="2">
    <citation type="journal article" date="2001" name="J. Gen. Virol.">
        <title>Genetic and ultrastructural characterization of a European isolate of the fatal endotheliotropic elephant herpesvirus.</title>
        <authorList>
            <person name="Ehlers B."/>
            <person name="Burkhardt S."/>
            <person name="Goltz M."/>
            <person name="Bergmann V."/>
            <person name="Ochs A."/>
            <person name="Weiler H."/>
            <person name="Hentschke J."/>
        </authorList>
    </citation>
    <scope>NUCLEOTIDE SEQUENCE [GENOMIC DNA]</scope>
</reference>
<feature type="chain" id="PRO_0000408168" description="Capsid vertex component 2">
    <location>
        <begin position="1"/>
        <end position="579"/>
    </location>
</feature>
<feature type="region of interest" description="Interaction with major capsid protein/MCP" evidence="1">
    <location>
        <begin position="1"/>
        <end position="46"/>
    </location>
</feature>
<feature type="region of interest" description="Disordered" evidence="2">
    <location>
        <begin position="92"/>
        <end position="134"/>
    </location>
</feature>
<feature type="compositionally biased region" description="Low complexity" evidence="2">
    <location>
        <begin position="101"/>
        <end position="121"/>
    </location>
</feature>
<evidence type="ECO:0000255" key="1">
    <source>
        <dbReference type="HAMAP-Rule" id="MF_04025"/>
    </source>
</evidence>
<evidence type="ECO:0000256" key="2">
    <source>
        <dbReference type="SAM" id="MobiDB-lite"/>
    </source>
</evidence>
<protein>
    <recommendedName>
        <fullName evidence="1">Capsid vertex component 2</fullName>
    </recommendedName>
</protein>
<comment type="function">
    <text evidence="1">Capsid vertex-specific component that plays a role during viral DNA encapsidation, assuring correct genome cleavage and presumably stabilizing capsids that contain full-length viral genomes. Participates in the interaction between the capsid and the tegument through interaction with the large tegument protein/LTP.</text>
</comment>
<comment type="subunit">
    <text evidence="1">Heterodimerizes with CVC1. Interacts with major capsid protein/MCP and triplex capsid protein 1/TRX1 at the pentamer vertices. Interacts with the large tegument protein/LTP.</text>
</comment>
<comment type="subcellular location">
    <subcellularLocation>
        <location evidence="1">Virion</location>
    </subcellularLocation>
    <subcellularLocation>
        <location evidence="1">Host nucleus</location>
    </subcellularLocation>
</comment>
<comment type="similarity">
    <text evidence="1">Belongs to the herpesviridae CVC2 protein family.</text>
</comment>
<gene>
    <name evidence="1" type="primary">CVC2</name>
</gene>
<organism>
    <name type="scientific">Elephantid herpesvirus 1 (isolate Asian elephant/Berlin/Kiba/1998)</name>
    <name type="common">EIHV-1</name>
    <name type="synonym">Elephant endotheliotropic herpesvirus</name>
    <dbReference type="NCBI Taxonomy" id="654902"/>
    <lineage>
        <taxon>Viruses</taxon>
        <taxon>Duplodnaviria</taxon>
        <taxon>Heunggongvirae</taxon>
        <taxon>Peploviricota</taxon>
        <taxon>Herviviricetes</taxon>
        <taxon>Herpesvirales</taxon>
        <taxon>Orthoherpesviridae</taxon>
        <taxon>Betaherpesvirinae</taxon>
        <taxon>Proboscivirus</taxon>
        <taxon>Proboscivirus elephantidbeta1</taxon>
        <taxon>Elephantid herpesvirus 1</taxon>
    </lineage>
</organism>
<dbReference type="EMBL" id="AF322977">
    <property type="protein sequence ID" value="ABG36573.1"/>
    <property type="molecule type" value="Genomic_DNA"/>
</dbReference>
<dbReference type="SMR" id="Q18LE6"/>
<dbReference type="GO" id="GO:0043657">
    <property type="term" value="C:host cell"/>
    <property type="evidence" value="ECO:0007669"/>
    <property type="project" value="GOC"/>
</dbReference>
<dbReference type="GO" id="GO:0042025">
    <property type="term" value="C:host cell nucleus"/>
    <property type="evidence" value="ECO:0007669"/>
    <property type="project" value="UniProtKB-SubCell"/>
</dbReference>
<dbReference type="GO" id="GO:0019028">
    <property type="term" value="C:viral capsid"/>
    <property type="evidence" value="ECO:0007669"/>
    <property type="project" value="UniProtKB-KW"/>
</dbReference>
<dbReference type="GO" id="GO:0046718">
    <property type="term" value="P:symbiont entry into host cell"/>
    <property type="evidence" value="ECO:0007669"/>
    <property type="project" value="UniProtKB-KW"/>
</dbReference>
<dbReference type="GO" id="GO:0019072">
    <property type="term" value="P:viral genome packaging"/>
    <property type="evidence" value="ECO:0007669"/>
    <property type="project" value="InterPro"/>
</dbReference>
<dbReference type="GO" id="GO:0075732">
    <property type="term" value="P:viral penetration into host nucleus"/>
    <property type="evidence" value="ECO:0007669"/>
    <property type="project" value="UniProtKB-KW"/>
</dbReference>
<dbReference type="HAMAP" id="MF_04025">
    <property type="entry name" value="HSV_CVC2"/>
    <property type="match status" value="1"/>
</dbReference>
<dbReference type="InterPro" id="IPR002493">
    <property type="entry name" value="Herpes_UL25"/>
</dbReference>
<dbReference type="Pfam" id="PF01499">
    <property type="entry name" value="Herpes_UL25"/>
    <property type="match status" value="1"/>
</dbReference>
<sequence length="579" mass="66669">MSRFMHFYKSPVPLVLQAHKKNCLVYTNLRTRRLRLLAQLNQREKELKNQDFRVGHEKVINTIDEIRTFLVDNHDDIIESIDGVIRTLRDIRPNEQVSSSTTTGHNNTTGTPTQSVVSGTGAVTGTGGTSSVAPDANMVADKTVTITMADKPFEYRDSFRDEFIATMYNATLRSYTMGDWYSKLKQKIYDEERYRRRFKVTHPESPAISYELVCGQVQILDLVTVYPTTDIVITDIQSAICILWTLYNGILNTTLDLSVTFEEVFEKVPGMLDVLEAEIKKENGNTTLFGTYSFADNEDIVFYNPPKDKRYSPRTFENNVIVRLLYRLRCIQNMPNDPLGAAAQSNLGIGWDEDRLFRVCRKLLTGIVQDVPIFLHKQYYLRSGCTCISALLYVKCFLDSTSVFSPSDRKFSLDTFLPNANTYVDASDYRGRNIKNFSFLWKKYVTQLYKDRPSITFSGIFPGAVLFSIAYSVSNNWLGPGHVQRPHPNARTVKLQLLHNQPLYSYLWVQHRVPRHPLEVLKAHDRALFYFEYGIHLLLNQPISFTTHRNTLKRQFNVTDVYELCYFFVLGFVPVELII</sequence>
<organismHost>
    <name type="scientific">Elephas maximus</name>
    <name type="common">Indian elephant</name>
    <dbReference type="NCBI Taxonomy" id="9783"/>
</organismHost>
<organismHost>
    <name type="scientific">Loxodonta africana</name>
    <name type="common">African elephant</name>
    <dbReference type="NCBI Taxonomy" id="9785"/>
</organismHost>
<organismHost>
    <name type="scientific">Loxodonta cyclotis</name>
    <name type="common">African forest elephant</name>
    <dbReference type="NCBI Taxonomy" id="99490"/>
</organismHost>